<proteinExistence type="inferred from homology"/>
<keyword id="KW-0067">ATP-binding</keyword>
<keyword id="KW-0131">Cell cycle</keyword>
<keyword id="KW-0132">Cell division</keyword>
<keyword id="KW-0133">Cell shape</keyword>
<keyword id="KW-0961">Cell wall biogenesis/degradation</keyword>
<keyword id="KW-0963">Cytoplasm</keyword>
<keyword id="KW-0436">Ligase</keyword>
<keyword id="KW-0547">Nucleotide-binding</keyword>
<keyword id="KW-0573">Peptidoglycan synthesis</keyword>
<keyword id="KW-1185">Reference proteome</keyword>
<feature type="chain" id="PRO_0000109018" description="UDP-N-acetylmuramoylalanine--D-glutamate ligase">
    <location>
        <begin position="1"/>
        <end position="451"/>
    </location>
</feature>
<feature type="binding site" evidence="1">
    <location>
        <begin position="119"/>
        <end position="125"/>
    </location>
    <ligand>
        <name>ATP</name>
        <dbReference type="ChEBI" id="CHEBI:30616"/>
    </ligand>
</feature>
<gene>
    <name evidence="1" type="primary">murD</name>
    <name type="ordered locus">GK1118</name>
</gene>
<evidence type="ECO:0000255" key="1">
    <source>
        <dbReference type="HAMAP-Rule" id="MF_00639"/>
    </source>
</evidence>
<organism>
    <name type="scientific">Geobacillus kaustophilus (strain HTA426)</name>
    <dbReference type="NCBI Taxonomy" id="235909"/>
    <lineage>
        <taxon>Bacteria</taxon>
        <taxon>Bacillati</taxon>
        <taxon>Bacillota</taxon>
        <taxon>Bacilli</taxon>
        <taxon>Bacillales</taxon>
        <taxon>Anoxybacillaceae</taxon>
        <taxon>Geobacillus</taxon>
        <taxon>Geobacillus thermoleovorans group</taxon>
    </lineage>
</organism>
<name>MURD_GEOKA</name>
<accession>Q5L0X7</accession>
<protein>
    <recommendedName>
        <fullName evidence="1">UDP-N-acetylmuramoylalanine--D-glutamate ligase</fullName>
        <ecNumber evidence="1">6.3.2.9</ecNumber>
    </recommendedName>
    <alternativeName>
        <fullName evidence="1">D-glutamic acid-adding enzyme</fullName>
    </alternativeName>
    <alternativeName>
        <fullName evidence="1">UDP-N-acetylmuramoyl-L-alanyl-D-glutamate synthetase</fullName>
    </alternativeName>
</protein>
<sequence>MKPTRFYQHRRVLVIGLAKSGAAAARLLAELGAKVVVNDQKPLSENMEAKQLEPLGIRVVCGGHPLELLDEPFDLVVKNPGIPYTNPMVKKALEKGLPVVTEVELAYHISEGSFIGITGSNGKTTTTTLIYEMLKADGQDPLLAGNIGLVACEVAREAKPGQWLVTELSSFQLAGIDKFRPAIAVLLNIFDAHLDYHGTKEAYAAAKANIFRNQTERDYAVVNADDPLVMNIASSVRSQKVLFSATKLLGEGAYVQDGAIYWNGDPVIRIADIVLPGQHNLENILAAVAAAKLAGASDEAIRQVLATFSGVKHRLQYVAEIDGRRFYNDSKATNILATQKALSAFAGEPVILLAGGLDRGNEFDDLLPYLQQVKAVVLFGQTADKIGRIAQKAGIETIRYVDNVEKAVPVAFELSEPGDVILLSPACASWDQYKTFEERGDIFINAVHKLK</sequence>
<reference key="1">
    <citation type="journal article" date="2004" name="Nucleic Acids Res.">
        <title>Thermoadaptation trait revealed by the genome sequence of thermophilic Geobacillus kaustophilus.</title>
        <authorList>
            <person name="Takami H."/>
            <person name="Takaki Y."/>
            <person name="Chee G.-J."/>
            <person name="Nishi S."/>
            <person name="Shimamura S."/>
            <person name="Suzuki H."/>
            <person name="Matsui S."/>
            <person name="Uchiyama I."/>
        </authorList>
    </citation>
    <scope>NUCLEOTIDE SEQUENCE [LARGE SCALE GENOMIC DNA]</scope>
    <source>
        <strain>HTA426</strain>
    </source>
</reference>
<comment type="function">
    <text evidence="1">Cell wall formation. Catalyzes the addition of glutamate to the nucleotide precursor UDP-N-acetylmuramoyl-L-alanine (UMA).</text>
</comment>
<comment type="catalytic activity">
    <reaction evidence="1">
        <text>UDP-N-acetyl-alpha-D-muramoyl-L-alanine + D-glutamate + ATP = UDP-N-acetyl-alpha-D-muramoyl-L-alanyl-D-glutamate + ADP + phosphate + H(+)</text>
        <dbReference type="Rhea" id="RHEA:16429"/>
        <dbReference type="ChEBI" id="CHEBI:15378"/>
        <dbReference type="ChEBI" id="CHEBI:29986"/>
        <dbReference type="ChEBI" id="CHEBI:30616"/>
        <dbReference type="ChEBI" id="CHEBI:43474"/>
        <dbReference type="ChEBI" id="CHEBI:83898"/>
        <dbReference type="ChEBI" id="CHEBI:83900"/>
        <dbReference type="ChEBI" id="CHEBI:456216"/>
        <dbReference type="EC" id="6.3.2.9"/>
    </reaction>
</comment>
<comment type="pathway">
    <text evidence="1">Cell wall biogenesis; peptidoglycan biosynthesis.</text>
</comment>
<comment type="subcellular location">
    <subcellularLocation>
        <location evidence="1">Cytoplasm</location>
    </subcellularLocation>
</comment>
<comment type="similarity">
    <text evidence="1">Belongs to the MurCDEF family.</text>
</comment>
<dbReference type="EC" id="6.3.2.9" evidence="1"/>
<dbReference type="EMBL" id="BA000043">
    <property type="protein sequence ID" value="BAD75403.1"/>
    <property type="molecule type" value="Genomic_DNA"/>
</dbReference>
<dbReference type="RefSeq" id="WP_011230618.1">
    <property type="nucleotide sequence ID" value="NC_006510.1"/>
</dbReference>
<dbReference type="SMR" id="Q5L0X7"/>
<dbReference type="STRING" id="235909.GK1118"/>
<dbReference type="KEGG" id="gka:GK1118"/>
<dbReference type="PATRIC" id="fig|235909.7.peg.1218"/>
<dbReference type="eggNOG" id="COG0771">
    <property type="taxonomic scope" value="Bacteria"/>
</dbReference>
<dbReference type="HOGENOM" id="CLU_032540_0_1_9"/>
<dbReference type="UniPathway" id="UPA00219"/>
<dbReference type="Proteomes" id="UP000001172">
    <property type="component" value="Chromosome"/>
</dbReference>
<dbReference type="GO" id="GO:0005737">
    <property type="term" value="C:cytoplasm"/>
    <property type="evidence" value="ECO:0007669"/>
    <property type="project" value="UniProtKB-SubCell"/>
</dbReference>
<dbReference type="GO" id="GO:0005524">
    <property type="term" value="F:ATP binding"/>
    <property type="evidence" value="ECO:0007669"/>
    <property type="project" value="UniProtKB-UniRule"/>
</dbReference>
<dbReference type="GO" id="GO:0008764">
    <property type="term" value="F:UDP-N-acetylmuramoylalanine-D-glutamate ligase activity"/>
    <property type="evidence" value="ECO:0007669"/>
    <property type="project" value="UniProtKB-UniRule"/>
</dbReference>
<dbReference type="GO" id="GO:0051301">
    <property type="term" value="P:cell division"/>
    <property type="evidence" value="ECO:0007669"/>
    <property type="project" value="UniProtKB-KW"/>
</dbReference>
<dbReference type="GO" id="GO:0071555">
    <property type="term" value="P:cell wall organization"/>
    <property type="evidence" value="ECO:0007669"/>
    <property type="project" value="UniProtKB-KW"/>
</dbReference>
<dbReference type="GO" id="GO:0009252">
    <property type="term" value="P:peptidoglycan biosynthetic process"/>
    <property type="evidence" value="ECO:0007669"/>
    <property type="project" value="UniProtKB-UniRule"/>
</dbReference>
<dbReference type="GO" id="GO:0008360">
    <property type="term" value="P:regulation of cell shape"/>
    <property type="evidence" value="ECO:0007669"/>
    <property type="project" value="UniProtKB-KW"/>
</dbReference>
<dbReference type="Gene3D" id="3.90.190.20">
    <property type="entry name" value="Mur ligase, C-terminal domain"/>
    <property type="match status" value="1"/>
</dbReference>
<dbReference type="Gene3D" id="3.40.1190.10">
    <property type="entry name" value="Mur-like, catalytic domain"/>
    <property type="match status" value="1"/>
</dbReference>
<dbReference type="Gene3D" id="3.40.50.720">
    <property type="entry name" value="NAD(P)-binding Rossmann-like Domain"/>
    <property type="match status" value="1"/>
</dbReference>
<dbReference type="HAMAP" id="MF_00639">
    <property type="entry name" value="MurD"/>
    <property type="match status" value="1"/>
</dbReference>
<dbReference type="InterPro" id="IPR036565">
    <property type="entry name" value="Mur-like_cat_sf"/>
</dbReference>
<dbReference type="InterPro" id="IPR004101">
    <property type="entry name" value="Mur_ligase_C"/>
</dbReference>
<dbReference type="InterPro" id="IPR036615">
    <property type="entry name" value="Mur_ligase_C_dom_sf"/>
</dbReference>
<dbReference type="InterPro" id="IPR013221">
    <property type="entry name" value="Mur_ligase_cen"/>
</dbReference>
<dbReference type="InterPro" id="IPR005762">
    <property type="entry name" value="MurD"/>
</dbReference>
<dbReference type="NCBIfam" id="TIGR01087">
    <property type="entry name" value="murD"/>
    <property type="match status" value="1"/>
</dbReference>
<dbReference type="PANTHER" id="PTHR43692">
    <property type="entry name" value="UDP-N-ACETYLMURAMOYLALANINE--D-GLUTAMATE LIGASE"/>
    <property type="match status" value="1"/>
</dbReference>
<dbReference type="PANTHER" id="PTHR43692:SF1">
    <property type="entry name" value="UDP-N-ACETYLMURAMOYLALANINE--D-GLUTAMATE LIGASE"/>
    <property type="match status" value="1"/>
</dbReference>
<dbReference type="Pfam" id="PF02875">
    <property type="entry name" value="Mur_ligase_C"/>
    <property type="match status" value="1"/>
</dbReference>
<dbReference type="Pfam" id="PF08245">
    <property type="entry name" value="Mur_ligase_M"/>
    <property type="match status" value="1"/>
</dbReference>
<dbReference type="Pfam" id="PF21799">
    <property type="entry name" value="MurD-like_N"/>
    <property type="match status" value="1"/>
</dbReference>
<dbReference type="SUPFAM" id="SSF51984">
    <property type="entry name" value="MurCD N-terminal domain"/>
    <property type="match status" value="1"/>
</dbReference>
<dbReference type="SUPFAM" id="SSF53623">
    <property type="entry name" value="MurD-like peptide ligases, catalytic domain"/>
    <property type="match status" value="1"/>
</dbReference>
<dbReference type="SUPFAM" id="SSF53244">
    <property type="entry name" value="MurD-like peptide ligases, peptide-binding domain"/>
    <property type="match status" value="1"/>
</dbReference>